<organism>
    <name type="scientific">Thermomicrobium roseum (strain ATCC 27502 / DSM 5159 / P-2)</name>
    <dbReference type="NCBI Taxonomy" id="309801"/>
    <lineage>
        <taxon>Bacteria</taxon>
        <taxon>Pseudomonadati</taxon>
        <taxon>Thermomicrobiota</taxon>
        <taxon>Thermomicrobia</taxon>
        <taxon>Thermomicrobiales</taxon>
        <taxon>Thermomicrobiaceae</taxon>
        <taxon>Thermomicrobium</taxon>
    </lineage>
</organism>
<proteinExistence type="inferred from homology"/>
<protein>
    <recommendedName>
        <fullName evidence="1">NADH-quinone oxidoreductase subunit K</fullName>
        <ecNumber evidence="1">7.1.1.-</ecNumber>
    </recommendedName>
    <alternativeName>
        <fullName evidence="1">NADH dehydrogenase I subunit K</fullName>
    </alternativeName>
    <alternativeName>
        <fullName evidence="1">NDH-1 subunit K</fullName>
    </alternativeName>
</protein>
<gene>
    <name evidence="1" type="primary">nuoK</name>
    <name type="ordered locus">trd_1786</name>
</gene>
<evidence type="ECO:0000255" key="1">
    <source>
        <dbReference type="HAMAP-Rule" id="MF_01456"/>
    </source>
</evidence>
<reference key="1">
    <citation type="journal article" date="2009" name="PLoS ONE">
        <title>Complete genome sequence of the aerobic CO-oxidizing thermophile Thermomicrobium roseum.</title>
        <authorList>
            <person name="Wu D."/>
            <person name="Raymond J."/>
            <person name="Wu M."/>
            <person name="Chatterji S."/>
            <person name="Ren Q."/>
            <person name="Graham J.E."/>
            <person name="Bryant D.A."/>
            <person name="Robb F."/>
            <person name="Colman A."/>
            <person name="Tallon L.J."/>
            <person name="Badger J.H."/>
            <person name="Madupu R."/>
            <person name="Ward N.L."/>
            <person name="Eisen J.A."/>
        </authorList>
    </citation>
    <scope>NUCLEOTIDE SEQUENCE [LARGE SCALE GENOMIC DNA]</scope>
    <source>
        <strain>ATCC 27502 / DSM 5159 / P-2</strain>
    </source>
</reference>
<feature type="chain" id="PRO_0000390264" description="NADH-quinone oxidoreductase subunit K">
    <location>
        <begin position="1"/>
        <end position="102"/>
    </location>
</feature>
<feature type="transmembrane region" description="Helical" evidence="1">
    <location>
        <begin position="6"/>
        <end position="26"/>
    </location>
</feature>
<feature type="transmembrane region" description="Helical" evidence="1">
    <location>
        <begin position="31"/>
        <end position="51"/>
    </location>
</feature>
<feature type="transmembrane region" description="Helical" evidence="1">
    <location>
        <begin position="62"/>
        <end position="82"/>
    </location>
</feature>
<dbReference type="EC" id="7.1.1.-" evidence="1"/>
<dbReference type="EMBL" id="CP001275">
    <property type="protein sequence ID" value="ACM06084.1"/>
    <property type="molecule type" value="Genomic_DNA"/>
</dbReference>
<dbReference type="RefSeq" id="WP_015922728.1">
    <property type="nucleotide sequence ID" value="NC_011959.1"/>
</dbReference>
<dbReference type="SMR" id="B9L175"/>
<dbReference type="STRING" id="309801.trd_1786"/>
<dbReference type="KEGG" id="tro:trd_1786"/>
<dbReference type="eggNOG" id="COG0713">
    <property type="taxonomic scope" value="Bacteria"/>
</dbReference>
<dbReference type="HOGENOM" id="CLU_144724_1_1_0"/>
<dbReference type="OrthoDB" id="9810120at2"/>
<dbReference type="Proteomes" id="UP000000447">
    <property type="component" value="Chromosome"/>
</dbReference>
<dbReference type="GO" id="GO:0030964">
    <property type="term" value="C:NADH dehydrogenase complex"/>
    <property type="evidence" value="ECO:0007669"/>
    <property type="project" value="TreeGrafter"/>
</dbReference>
<dbReference type="GO" id="GO:0005886">
    <property type="term" value="C:plasma membrane"/>
    <property type="evidence" value="ECO:0007669"/>
    <property type="project" value="UniProtKB-SubCell"/>
</dbReference>
<dbReference type="GO" id="GO:0050136">
    <property type="term" value="F:NADH:ubiquinone reductase (non-electrogenic) activity"/>
    <property type="evidence" value="ECO:0007669"/>
    <property type="project" value="UniProtKB-UniRule"/>
</dbReference>
<dbReference type="GO" id="GO:0048038">
    <property type="term" value="F:quinone binding"/>
    <property type="evidence" value="ECO:0007669"/>
    <property type="project" value="UniProtKB-KW"/>
</dbReference>
<dbReference type="GO" id="GO:0042773">
    <property type="term" value="P:ATP synthesis coupled electron transport"/>
    <property type="evidence" value="ECO:0007669"/>
    <property type="project" value="InterPro"/>
</dbReference>
<dbReference type="FunFam" id="1.10.287.3510:FF:000001">
    <property type="entry name" value="NADH-quinone oxidoreductase subunit K"/>
    <property type="match status" value="1"/>
</dbReference>
<dbReference type="Gene3D" id="1.10.287.3510">
    <property type="match status" value="1"/>
</dbReference>
<dbReference type="HAMAP" id="MF_01456">
    <property type="entry name" value="NDH1_NuoK"/>
    <property type="match status" value="1"/>
</dbReference>
<dbReference type="InterPro" id="IPR001133">
    <property type="entry name" value="NADH_UbQ_OxRdtase_chain4L/K"/>
</dbReference>
<dbReference type="InterPro" id="IPR039428">
    <property type="entry name" value="NUOK/Mnh_C1-like"/>
</dbReference>
<dbReference type="NCBIfam" id="NF004320">
    <property type="entry name" value="PRK05715.1-2"/>
    <property type="match status" value="1"/>
</dbReference>
<dbReference type="NCBIfam" id="NF004321">
    <property type="entry name" value="PRK05715.1-3"/>
    <property type="match status" value="1"/>
</dbReference>
<dbReference type="NCBIfam" id="NF004323">
    <property type="entry name" value="PRK05715.1-5"/>
    <property type="match status" value="1"/>
</dbReference>
<dbReference type="PANTHER" id="PTHR11434:SF16">
    <property type="entry name" value="NADH-UBIQUINONE OXIDOREDUCTASE CHAIN 4L"/>
    <property type="match status" value="1"/>
</dbReference>
<dbReference type="PANTHER" id="PTHR11434">
    <property type="entry name" value="NADH-UBIQUINONE OXIDOREDUCTASE SUBUNIT ND4L"/>
    <property type="match status" value="1"/>
</dbReference>
<dbReference type="Pfam" id="PF00420">
    <property type="entry name" value="Oxidored_q2"/>
    <property type="match status" value="1"/>
</dbReference>
<comment type="function">
    <text evidence="1">NDH-1 shuttles electrons from NADH, via FMN and iron-sulfur (Fe-S) centers, to quinones in the respiratory chain. The immediate electron acceptor for the enzyme in this species is believed to be ubiquinone. Couples the redox reaction to proton translocation (for every two electrons transferred, four hydrogen ions are translocated across the cytoplasmic membrane), and thus conserves the redox energy in a proton gradient.</text>
</comment>
<comment type="catalytic activity">
    <reaction evidence="1">
        <text>a quinone + NADH + 5 H(+)(in) = a quinol + NAD(+) + 4 H(+)(out)</text>
        <dbReference type="Rhea" id="RHEA:57888"/>
        <dbReference type="ChEBI" id="CHEBI:15378"/>
        <dbReference type="ChEBI" id="CHEBI:24646"/>
        <dbReference type="ChEBI" id="CHEBI:57540"/>
        <dbReference type="ChEBI" id="CHEBI:57945"/>
        <dbReference type="ChEBI" id="CHEBI:132124"/>
    </reaction>
</comment>
<comment type="subunit">
    <text evidence="1">NDH-1 is composed of 14 different subunits. Subunits NuoA, H, J, K, L, M, N constitute the membrane sector of the complex.</text>
</comment>
<comment type="subcellular location">
    <subcellularLocation>
        <location evidence="1">Cell membrane</location>
        <topology evidence="1">Multi-pass membrane protein</topology>
    </subcellularLocation>
</comment>
<comment type="similarity">
    <text evidence="1">Belongs to the complex I subunit 4L family.</text>
</comment>
<keyword id="KW-1003">Cell membrane</keyword>
<keyword id="KW-0472">Membrane</keyword>
<keyword id="KW-0520">NAD</keyword>
<keyword id="KW-0874">Quinone</keyword>
<keyword id="KW-1185">Reference proteome</keyword>
<keyword id="KW-1278">Translocase</keyword>
<keyword id="KW-0812">Transmembrane</keyword>
<keyword id="KW-1133">Transmembrane helix</keyword>
<keyword id="KW-0813">Transport</keyword>
<keyword id="KW-0830">Ubiquinone</keyword>
<sequence length="102" mass="11186">MSELSATHFLLLSAALFIIGMVGVLTRRNVLVIFMCIELMLNAVNVSLIGFAWELHQLTGQVFALFVIAIAAAEAVVGLGIVMALTRRTDTVDIDELRQLRE</sequence>
<accession>B9L175</accession>
<name>NUOK_THERP</name>